<name>DEF_BACTN</name>
<accession>Q8AAP4</accession>
<gene>
    <name evidence="1" type="primary">def</name>
    <name type="ordered locus">BT_0420</name>
</gene>
<organism>
    <name type="scientific">Bacteroides thetaiotaomicron (strain ATCC 29148 / DSM 2079 / JCM 5827 / CCUG 10774 / NCTC 10582 / VPI-5482 / E50)</name>
    <dbReference type="NCBI Taxonomy" id="226186"/>
    <lineage>
        <taxon>Bacteria</taxon>
        <taxon>Pseudomonadati</taxon>
        <taxon>Bacteroidota</taxon>
        <taxon>Bacteroidia</taxon>
        <taxon>Bacteroidales</taxon>
        <taxon>Bacteroidaceae</taxon>
        <taxon>Bacteroides</taxon>
    </lineage>
</organism>
<sequence>MILPIYVYGQPVLRKVAEDITPEYPNLKELIANMFETMVHADGVGLAAPQIGLPIRVVTITLDPLSEDYPEFKDFNKAYINPHIIEVGGEEVSMEEGCLSLPGIHESVKRGNKIRVKYMDENFVEHDEVVEGYLARVMQHEFDHLDGKMFIDHLSPLRKQMIRGKLNTMLKGKARSSYKMKQVK</sequence>
<evidence type="ECO:0000255" key="1">
    <source>
        <dbReference type="HAMAP-Rule" id="MF_00163"/>
    </source>
</evidence>
<reference key="1">
    <citation type="journal article" date="2003" name="Science">
        <title>A genomic view of the human-Bacteroides thetaiotaomicron symbiosis.</title>
        <authorList>
            <person name="Xu J."/>
            <person name="Bjursell M.K."/>
            <person name="Himrod J."/>
            <person name="Deng S."/>
            <person name="Carmichael L.K."/>
            <person name="Chiang H.C."/>
            <person name="Hooper L.V."/>
            <person name="Gordon J.I."/>
        </authorList>
    </citation>
    <scope>NUCLEOTIDE SEQUENCE [LARGE SCALE GENOMIC DNA]</scope>
    <source>
        <strain>ATCC 29148 / DSM 2079 / JCM 5827 / CCUG 10774 / NCTC 10582 / VPI-5482 / E50</strain>
    </source>
</reference>
<keyword id="KW-0378">Hydrolase</keyword>
<keyword id="KW-0408">Iron</keyword>
<keyword id="KW-0479">Metal-binding</keyword>
<keyword id="KW-0648">Protein biosynthesis</keyword>
<keyword id="KW-1185">Reference proteome</keyword>
<proteinExistence type="inferred from homology"/>
<comment type="function">
    <text evidence="1">Removes the formyl group from the N-terminal Met of newly synthesized proteins. Requires at least a dipeptide for an efficient rate of reaction. N-terminal L-methionine is a prerequisite for activity but the enzyme has broad specificity at other positions.</text>
</comment>
<comment type="catalytic activity">
    <reaction evidence="1">
        <text>N-terminal N-formyl-L-methionyl-[peptide] + H2O = N-terminal L-methionyl-[peptide] + formate</text>
        <dbReference type="Rhea" id="RHEA:24420"/>
        <dbReference type="Rhea" id="RHEA-COMP:10639"/>
        <dbReference type="Rhea" id="RHEA-COMP:10640"/>
        <dbReference type="ChEBI" id="CHEBI:15377"/>
        <dbReference type="ChEBI" id="CHEBI:15740"/>
        <dbReference type="ChEBI" id="CHEBI:49298"/>
        <dbReference type="ChEBI" id="CHEBI:64731"/>
        <dbReference type="EC" id="3.5.1.88"/>
    </reaction>
</comment>
<comment type="cofactor">
    <cofactor evidence="1">
        <name>Fe(2+)</name>
        <dbReference type="ChEBI" id="CHEBI:29033"/>
    </cofactor>
    <text evidence="1">Binds 1 Fe(2+) ion.</text>
</comment>
<comment type="similarity">
    <text evidence="1">Belongs to the polypeptide deformylase family.</text>
</comment>
<protein>
    <recommendedName>
        <fullName evidence="1">Peptide deformylase</fullName>
        <shortName evidence="1">PDF</shortName>
        <ecNumber evidence="1">3.5.1.88</ecNumber>
    </recommendedName>
    <alternativeName>
        <fullName evidence="1">Polypeptide deformylase</fullName>
    </alternativeName>
</protein>
<feature type="chain" id="PRO_0000082741" description="Peptide deformylase">
    <location>
        <begin position="1"/>
        <end position="184"/>
    </location>
</feature>
<feature type="active site" evidence="1">
    <location>
        <position position="141"/>
    </location>
</feature>
<feature type="binding site" evidence="1">
    <location>
        <position position="98"/>
    </location>
    <ligand>
        <name>Fe cation</name>
        <dbReference type="ChEBI" id="CHEBI:24875"/>
    </ligand>
</feature>
<feature type="binding site" evidence="1">
    <location>
        <position position="140"/>
    </location>
    <ligand>
        <name>Fe cation</name>
        <dbReference type="ChEBI" id="CHEBI:24875"/>
    </ligand>
</feature>
<feature type="binding site" evidence="1">
    <location>
        <position position="144"/>
    </location>
    <ligand>
        <name>Fe cation</name>
        <dbReference type="ChEBI" id="CHEBI:24875"/>
    </ligand>
</feature>
<dbReference type="EC" id="3.5.1.88" evidence="1"/>
<dbReference type="EMBL" id="AE015928">
    <property type="protein sequence ID" value="AAO75527.1"/>
    <property type="molecule type" value="Genomic_DNA"/>
</dbReference>
<dbReference type="RefSeq" id="NP_809333.1">
    <property type="nucleotide sequence ID" value="NC_004663.1"/>
</dbReference>
<dbReference type="RefSeq" id="WP_008760700.1">
    <property type="nucleotide sequence ID" value="NZ_UYXG01000041.1"/>
</dbReference>
<dbReference type="SMR" id="Q8AAP4"/>
<dbReference type="FunCoup" id="Q8AAP4">
    <property type="interactions" value="474"/>
</dbReference>
<dbReference type="STRING" id="226186.BT_0420"/>
<dbReference type="PaxDb" id="226186-BT_0420"/>
<dbReference type="EnsemblBacteria" id="AAO75527">
    <property type="protein sequence ID" value="AAO75527"/>
    <property type="gene ID" value="BT_0420"/>
</dbReference>
<dbReference type="GeneID" id="60926378"/>
<dbReference type="KEGG" id="bth:BT_0420"/>
<dbReference type="PATRIC" id="fig|226186.12.peg.418"/>
<dbReference type="eggNOG" id="COG0242">
    <property type="taxonomic scope" value="Bacteria"/>
</dbReference>
<dbReference type="HOGENOM" id="CLU_061901_2_0_10"/>
<dbReference type="InParanoid" id="Q8AAP4"/>
<dbReference type="OrthoDB" id="9784988at2"/>
<dbReference type="Proteomes" id="UP000001414">
    <property type="component" value="Chromosome"/>
</dbReference>
<dbReference type="GO" id="GO:0046872">
    <property type="term" value="F:metal ion binding"/>
    <property type="evidence" value="ECO:0007669"/>
    <property type="project" value="UniProtKB-KW"/>
</dbReference>
<dbReference type="GO" id="GO:0042586">
    <property type="term" value="F:peptide deformylase activity"/>
    <property type="evidence" value="ECO:0000318"/>
    <property type="project" value="GO_Central"/>
</dbReference>
<dbReference type="GO" id="GO:0043686">
    <property type="term" value="P:co-translational protein modification"/>
    <property type="evidence" value="ECO:0000318"/>
    <property type="project" value="GO_Central"/>
</dbReference>
<dbReference type="GO" id="GO:0006412">
    <property type="term" value="P:translation"/>
    <property type="evidence" value="ECO:0007669"/>
    <property type="project" value="UniProtKB-UniRule"/>
</dbReference>
<dbReference type="CDD" id="cd00487">
    <property type="entry name" value="Pep_deformylase"/>
    <property type="match status" value="1"/>
</dbReference>
<dbReference type="FunFam" id="3.90.45.10:FF:000007">
    <property type="entry name" value="Peptide deformylase"/>
    <property type="match status" value="1"/>
</dbReference>
<dbReference type="Gene3D" id="3.90.45.10">
    <property type="entry name" value="Peptide deformylase"/>
    <property type="match status" value="1"/>
</dbReference>
<dbReference type="HAMAP" id="MF_00163">
    <property type="entry name" value="Pep_deformylase"/>
    <property type="match status" value="1"/>
</dbReference>
<dbReference type="InterPro" id="IPR023635">
    <property type="entry name" value="Peptide_deformylase"/>
</dbReference>
<dbReference type="InterPro" id="IPR036821">
    <property type="entry name" value="Peptide_deformylase_sf"/>
</dbReference>
<dbReference type="NCBIfam" id="TIGR00079">
    <property type="entry name" value="pept_deformyl"/>
    <property type="match status" value="1"/>
</dbReference>
<dbReference type="NCBIfam" id="NF001159">
    <property type="entry name" value="PRK00150.1-3"/>
    <property type="match status" value="1"/>
</dbReference>
<dbReference type="PANTHER" id="PTHR10458">
    <property type="entry name" value="PEPTIDE DEFORMYLASE"/>
    <property type="match status" value="1"/>
</dbReference>
<dbReference type="PANTHER" id="PTHR10458:SF22">
    <property type="entry name" value="PEPTIDE DEFORMYLASE"/>
    <property type="match status" value="1"/>
</dbReference>
<dbReference type="Pfam" id="PF01327">
    <property type="entry name" value="Pep_deformylase"/>
    <property type="match status" value="1"/>
</dbReference>
<dbReference type="PIRSF" id="PIRSF004749">
    <property type="entry name" value="Pep_def"/>
    <property type="match status" value="1"/>
</dbReference>
<dbReference type="PRINTS" id="PR01576">
    <property type="entry name" value="PDEFORMYLASE"/>
</dbReference>
<dbReference type="SUPFAM" id="SSF56420">
    <property type="entry name" value="Peptide deformylase"/>
    <property type="match status" value="1"/>
</dbReference>